<comment type="function">
    <text evidence="2">GTP hydrolase that promotes the GTP-dependent binding of aminoacyl-tRNA to the A-site of ribosomes during protein biosynthesis.</text>
</comment>
<comment type="catalytic activity">
    <reaction evidence="2">
        <text>GTP + H2O = GDP + phosphate + H(+)</text>
        <dbReference type="Rhea" id="RHEA:19669"/>
        <dbReference type="ChEBI" id="CHEBI:15377"/>
        <dbReference type="ChEBI" id="CHEBI:15378"/>
        <dbReference type="ChEBI" id="CHEBI:37565"/>
        <dbReference type="ChEBI" id="CHEBI:43474"/>
        <dbReference type="ChEBI" id="CHEBI:58189"/>
        <dbReference type="EC" id="3.6.5.3"/>
    </reaction>
    <physiologicalReaction direction="left-to-right" evidence="2">
        <dbReference type="Rhea" id="RHEA:19670"/>
    </physiologicalReaction>
</comment>
<comment type="subunit">
    <text evidence="2">Monomer.</text>
</comment>
<comment type="subcellular location">
    <subcellularLocation>
        <location evidence="2">Cytoplasm</location>
    </subcellularLocation>
</comment>
<comment type="similarity">
    <text evidence="2">Belongs to the TRAFAC class translation factor GTPase superfamily. Classic translation factor GTPase family. EF-Tu/EF-1A subfamily.</text>
</comment>
<proteinExistence type="inferred from homology"/>
<name>EFTU_CHLCV</name>
<protein>
    <recommendedName>
        <fullName evidence="2">Elongation factor Tu</fullName>
        <shortName evidence="2">EF-Tu</shortName>
        <ecNumber evidence="2">3.6.5.3</ecNumber>
    </recommendedName>
</protein>
<accession>Q822I4</accession>
<dbReference type="EC" id="3.6.5.3" evidence="2"/>
<dbReference type="EMBL" id="AE015925">
    <property type="protein sequence ID" value="AAP05440.1"/>
    <property type="molecule type" value="Genomic_DNA"/>
</dbReference>
<dbReference type="RefSeq" id="WP_011006655.1">
    <property type="nucleotide sequence ID" value="NC_003361.3"/>
</dbReference>
<dbReference type="SMR" id="Q822I4"/>
<dbReference type="STRING" id="227941.CCA_00698"/>
<dbReference type="KEGG" id="cca:CCA_00698"/>
<dbReference type="eggNOG" id="COG0050">
    <property type="taxonomic scope" value="Bacteria"/>
</dbReference>
<dbReference type="HOGENOM" id="CLU_007265_0_1_0"/>
<dbReference type="OrthoDB" id="9804504at2"/>
<dbReference type="Proteomes" id="UP000002193">
    <property type="component" value="Chromosome"/>
</dbReference>
<dbReference type="GO" id="GO:0005829">
    <property type="term" value="C:cytosol"/>
    <property type="evidence" value="ECO:0007669"/>
    <property type="project" value="TreeGrafter"/>
</dbReference>
<dbReference type="GO" id="GO:0005525">
    <property type="term" value="F:GTP binding"/>
    <property type="evidence" value="ECO:0007669"/>
    <property type="project" value="UniProtKB-UniRule"/>
</dbReference>
<dbReference type="GO" id="GO:0003924">
    <property type="term" value="F:GTPase activity"/>
    <property type="evidence" value="ECO:0007669"/>
    <property type="project" value="InterPro"/>
</dbReference>
<dbReference type="GO" id="GO:0003746">
    <property type="term" value="F:translation elongation factor activity"/>
    <property type="evidence" value="ECO:0007669"/>
    <property type="project" value="UniProtKB-UniRule"/>
</dbReference>
<dbReference type="CDD" id="cd01884">
    <property type="entry name" value="EF_Tu"/>
    <property type="match status" value="1"/>
</dbReference>
<dbReference type="CDD" id="cd03697">
    <property type="entry name" value="EFTU_II"/>
    <property type="match status" value="1"/>
</dbReference>
<dbReference type="CDD" id="cd03707">
    <property type="entry name" value="EFTU_III"/>
    <property type="match status" value="1"/>
</dbReference>
<dbReference type="FunFam" id="2.40.30.10:FF:000002">
    <property type="entry name" value="Elongation factor Tu"/>
    <property type="match status" value="1"/>
</dbReference>
<dbReference type="FunFam" id="3.40.50.300:FF:000003">
    <property type="entry name" value="Elongation factor Tu"/>
    <property type="match status" value="1"/>
</dbReference>
<dbReference type="FunFam" id="2.40.30.10:FF:000020">
    <property type="entry name" value="Translation elongation factor EF-1"/>
    <property type="match status" value="1"/>
</dbReference>
<dbReference type="Gene3D" id="3.40.50.300">
    <property type="entry name" value="P-loop containing nucleotide triphosphate hydrolases"/>
    <property type="match status" value="1"/>
</dbReference>
<dbReference type="Gene3D" id="2.40.30.10">
    <property type="entry name" value="Translation factors"/>
    <property type="match status" value="2"/>
</dbReference>
<dbReference type="HAMAP" id="MF_00118_B">
    <property type="entry name" value="EF_Tu_B"/>
    <property type="match status" value="1"/>
</dbReference>
<dbReference type="InterPro" id="IPR041709">
    <property type="entry name" value="EF-Tu_GTP-bd"/>
</dbReference>
<dbReference type="InterPro" id="IPR050055">
    <property type="entry name" value="EF-Tu_GTPase"/>
</dbReference>
<dbReference type="InterPro" id="IPR004161">
    <property type="entry name" value="EFTu-like_2"/>
</dbReference>
<dbReference type="InterPro" id="IPR033720">
    <property type="entry name" value="EFTU_2"/>
</dbReference>
<dbReference type="InterPro" id="IPR031157">
    <property type="entry name" value="G_TR_CS"/>
</dbReference>
<dbReference type="InterPro" id="IPR027417">
    <property type="entry name" value="P-loop_NTPase"/>
</dbReference>
<dbReference type="InterPro" id="IPR005225">
    <property type="entry name" value="Small_GTP-bd"/>
</dbReference>
<dbReference type="InterPro" id="IPR000795">
    <property type="entry name" value="T_Tr_GTP-bd_dom"/>
</dbReference>
<dbReference type="InterPro" id="IPR009000">
    <property type="entry name" value="Transl_B-barrel_sf"/>
</dbReference>
<dbReference type="InterPro" id="IPR009001">
    <property type="entry name" value="Transl_elong_EF1A/Init_IF2_C"/>
</dbReference>
<dbReference type="InterPro" id="IPR004541">
    <property type="entry name" value="Transl_elong_EFTu/EF1A_bac/org"/>
</dbReference>
<dbReference type="InterPro" id="IPR004160">
    <property type="entry name" value="Transl_elong_EFTu/EF1A_C"/>
</dbReference>
<dbReference type="NCBIfam" id="TIGR00485">
    <property type="entry name" value="EF-Tu"/>
    <property type="match status" value="1"/>
</dbReference>
<dbReference type="NCBIfam" id="NF000766">
    <property type="entry name" value="PRK00049.1"/>
    <property type="match status" value="1"/>
</dbReference>
<dbReference type="NCBIfam" id="NF009372">
    <property type="entry name" value="PRK12735.1"/>
    <property type="match status" value="1"/>
</dbReference>
<dbReference type="NCBIfam" id="NF009373">
    <property type="entry name" value="PRK12736.1"/>
    <property type="match status" value="1"/>
</dbReference>
<dbReference type="NCBIfam" id="TIGR00231">
    <property type="entry name" value="small_GTP"/>
    <property type="match status" value="1"/>
</dbReference>
<dbReference type="PANTHER" id="PTHR43721:SF22">
    <property type="entry name" value="ELONGATION FACTOR TU, MITOCHONDRIAL"/>
    <property type="match status" value="1"/>
</dbReference>
<dbReference type="PANTHER" id="PTHR43721">
    <property type="entry name" value="ELONGATION FACTOR TU-RELATED"/>
    <property type="match status" value="1"/>
</dbReference>
<dbReference type="Pfam" id="PF00009">
    <property type="entry name" value="GTP_EFTU"/>
    <property type="match status" value="1"/>
</dbReference>
<dbReference type="Pfam" id="PF03144">
    <property type="entry name" value="GTP_EFTU_D2"/>
    <property type="match status" value="1"/>
</dbReference>
<dbReference type="Pfam" id="PF03143">
    <property type="entry name" value="GTP_EFTU_D3"/>
    <property type="match status" value="1"/>
</dbReference>
<dbReference type="PRINTS" id="PR00315">
    <property type="entry name" value="ELONGATNFCT"/>
</dbReference>
<dbReference type="SUPFAM" id="SSF50465">
    <property type="entry name" value="EF-Tu/eEF-1alpha/eIF2-gamma C-terminal domain"/>
    <property type="match status" value="1"/>
</dbReference>
<dbReference type="SUPFAM" id="SSF52540">
    <property type="entry name" value="P-loop containing nucleoside triphosphate hydrolases"/>
    <property type="match status" value="1"/>
</dbReference>
<dbReference type="SUPFAM" id="SSF50447">
    <property type="entry name" value="Translation proteins"/>
    <property type="match status" value="1"/>
</dbReference>
<dbReference type="PROSITE" id="PS00301">
    <property type="entry name" value="G_TR_1"/>
    <property type="match status" value="1"/>
</dbReference>
<dbReference type="PROSITE" id="PS51722">
    <property type="entry name" value="G_TR_2"/>
    <property type="match status" value="1"/>
</dbReference>
<gene>
    <name evidence="2" type="primary">tuf</name>
    <name type="ordered locus">CCA_00698</name>
</gene>
<reference key="1">
    <citation type="journal article" date="2003" name="Nucleic Acids Res.">
        <title>Genome sequence of Chlamydophila caviae (Chlamydia psittaci GPIC): examining the role of niche-specific genes in the evolution of the Chlamydiaceae.</title>
        <authorList>
            <person name="Read T.D."/>
            <person name="Myers G.S.A."/>
            <person name="Brunham R.C."/>
            <person name="Nelson W.C."/>
            <person name="Paulsen I.T."/>
            <person name="Heidelberg J.F."/>
            <person name="Holtzapple E.K."/>
            <person name="Khouri H.M."/>
            <person name="Federova N.B."/>
            <person name="Carty H.A."/>
            <person name="Umayam L.A."/>
            <person name="Haft D.H."/>
            <person name="Peterson J.D."/>
            <person name="Beanan M.J."/>
            <person name="White O."/>
            <person name="Salzberg S.L."/>
            <person name="Hsia R.-C."/>
            <person name="McClarty G."/>
            <person name="Rank R.G."/>
            <person name="Bavoil P.M."/>
            <person name="Fraser C.M."/>
        </authorList>
    </citation>
    <scope>NUCLEOTIDE SEQUENCE [LARGE SCALE GENOMIC DNA]</scope>
    <source>
        <strain>ATCC VR-813 / DSM 19441 / 03DC25 / GPIC</strain>
    </source>
</reference>
<sequence length="394" mass="43226">MSKETFQRNKPHINIGTIGHVDHGKTTLTAAITRALSAEGLANFCDYSSIDNTPEEKARGITINASHVEYETPNRHYAHVDCPGHADYVKNMITGAAQMDGAILVVSATDGAMPQTKEHILLARQVGVPYIVVFLNKIDMISQEDAELVDLVEMELSELLEEKGYKGCPIIRGSALKALEGDASYVEKIRELMQAVDDNIPTPEREVDKPFLMPIEDVFSISGRGTVVTGRIERGIVKVGDKVQIVGLRDTRETIVTGVEMFRKELPEGQAGENVGLLLRGIGKNDVERGMVICQPNSVKSHTQFKGAVYILQKEEGGRHKPFFTGYRPQFFFRTTDVTGVVTLPEGTEMVMPGDNVEFEVQLISPVALEEGMRFAIREGGRTIGAGTISKIIA</sequence>
<organism>
    <name type="scientific">Chlamydia caviae (strain ATCC VR-813 / DSM 19441 / 03DC25 / GPIC)</name>
    <name type="common">Chlamydophila caviae</name>
    <dbReference type="NCBI Taxonomy" id="227941"/>
    <lineage>
        <taxon>Bacteria</taxon>
        <taxon>Pseudomonadati</taxon>
        <taxon>Chlamydiota</taxon>
        <taxon>Chlamydiia</taxon>
        <taxon>Chlamydiales</taxon>
        <taxon>Chlamydiaceae</taxon>
        <taxon>Chlamydia/Chlamydophila group</taxon>
        <taxon>Chlamydia</taxon>
    </lineage>
</organism>
<keyword id="KW-0963">Cytoplasm</keyword>
<keyword id="KW-0251">Elongation factor</keyword>
<keyword id="KW-0342">GTP-binding</keyword>
<keyword id="KW-0378">Hydrolase</keyword>
<keyword id="KW-0460">Magnesium</keyword>
<keyword id="KW-0479">Metal-binding</keyword>
<keyword id="KW-0547">Nucleotide-binding</keyword>
<keyword id="KW-0648">Protein biosynthesis</keyword>
<evidence type="ECO:0000250" key="1"/>
<evidence type="ECO:0000255" key="2">
    <source>
        <dbReference type="HAMAP-Rule" id="MF_00118"/>
    </source>
</evidence>
<feature type="initiator methionine" description="Removed" evidence="1">
    <location>
        <position position="1"/>
    </location>
</feature>
<feature type="chain" id="PRO_0000091305" description="Elongation factor Tu">
    <location>
        <begin position="2"/>
        <end position="394"/>
    </location>
</feature>
<feature type="domain" description="tr-type G">
    <location>
        <begin position="10"/>
        <end position="204"/>
    </location>
</feature>
<feature type="region of interest" description="G1" evidence="1">
    <location>
        <begin position="19"/>
        <end position="26"/>
    </location>
</feature>
<feature type="region of interest" description="G2" evidence="1">
    <location>
        <begin position="60"/>
        <end position="64"/>
    </location>
</feature>
<feature type="region of interest" description="G3" evidence="1">
    <location>
        <begin position="81"/>
        <end position="84"/>
    </location>
</feature>
<feature type="region of interest" description="G4" evidence="1">
    <location>
        <begin position="136"/>
        <end position="139"/>
    </location>
</feature>
<feature type="region of interest" description="G5" evidence="1">
    <location>
        <begin position="174"/>
        <end position="176"/>
    </location>
</feature>
<feature type="binding site" evidence="2">
    <location>
        <begin position="19"/>
        <end position="26"/>
    </location>
    <ligand>
        <name>GTP</name>
        <dbReference type="ChEBI" id="CHEBI:37565"/>
    </ligand>
</feature>
<feature type="binding site" evidence="2">
    <location>
        <position position="26"/>
    </location>
    <ligand>
        <name>Mg(2+)</name>
        <dbReference type="ChEBI" id="CHEBI:18420"/>
    </ligand>
</feature>
<feature type="binding site" evidence="2">
    <location>
        <begin position="81"/>
        <end position="85"/>
    </location>
    <ligand>
        <name>GTP</name>
        <dbReference type="ChEBI" id="CHEBI:37565"/>
    </ligand>
</feature>
<feature type="binding site" evidence="2">
    <location>
        <begin position="136"/>
        <end position="139"/>
    </location>
    <ligand>
        <name>GTP</name>
        <dbReference type="ChEBI" id="CHEBI:37565"/>
    </ligand>
</feature>